<reference key="1">
    <citation type="journal article" date="1990" name="Proc. Natl. Acad. Sci. U.S.A.">
        <title>Conserved enzymes mediate the early reactions of carotenoid biosynthesis in nonphotosynthetic and photosynthetic prokaryotes.</title>
        <authorList>
            <person name="Armstrong G.A."/>
            <person name="Alberti M."/>
            <person name="Hearst J.E."/>
        </authorList>
    </citation>
    <scope>NUCLEOTIDE SEQUENCE [GENOMIC DNA]</scope>
    <source>
        <strain>ATCC 39368 / Eho10</strain>
    </source>
</reference>
<reference key="2">
    <citation type="journal article" date="1992" name="Proc. Natl. Acad. Sci. U.S.A.">
        <title>The crtE gene in Erwinia herbicola encodes geranylgeranyl diphosphate synthase.</title>
        <authorList>
            <person name="Math S.K."/>
            <person name="Hearst J.E."/>
            <person name="Poulter C.D."/>
        </authorList>
    </citation>
    <scope>FUNCTION</scope>
    <scope>CATALYTIC ACTIVITY</scope>
</reference>
<gene>
    <name type="primary">crtE</name>
</gene>
<accession>P22873</accession>
<proteinExistence type="evidence at protein level"/>
<name>CRTE_PSEVU</name>
<protein>
    <recommendedName>
        <fullName>Geranylgeranyl diphosphate synthase</fullName>
        <shortName>GGPP synthase</shortName>
        <ecNumber>2.5.1.29</ecNumber>
    </recommendedName>
    <alternativeName>
        <fullName>Farnesyltranstransferase</fullName>
    </alternativeName>
</protein>
<keyword id="KW-0125">Carotenoid biosynthesis</keyword>
<keyword id="KW-0414">Isoprene biosynthesis</keyword>
<keyword id="KW-0460">Magnesium</keyword>
<keyword id="KW-0479">Metal-binding</keyword>
<keyword id="KW-0808">Transferase</keyword>
<sequence length="307" mass="33242">MVSGSKAGVSPHREIEVMRQSIDDHLAGLLPETDSQDIVSLAMREGVMAPGKRIRPLLMLLAARDLRYQGSMPTLLDLACAVELTHTASLMLDDMPCMDNAELRRGQPTTHKKFGESVAILASVGLLSKAFGLIAATGDLPGERRAQAVNELSTAVGVQGLVLGQFRDLNDAALDRTPDAILSTNHLKTGILFSAMLQIVAIASASSPSTRETLHAFALDFGQAFQLLDDLRDDHPETGKDRNKDAGKSTLVNRLGADAARQKLREHIDSADKHLTFACPQGGAIRQFMHLWFGHHLADWSPVMKIA</sequence>
<feature type="chain" id="PRO_0000123992" description="Geranylgeranyl diphosphate synthase">
    <location>
        <begin position="1"/>
        <end position="307"/>
    </location>
</feature>
<feature type="binding site" evidence="2">
    <location>
        <position position="52"/>
    </location>
    <ligand>
        <name>isopentenyl diphosphate</name>
        <dbReference type="ChEBI" id="CHEBI:128769"/>
    </ligand>
</feature>
<feature type="binding site" evidence="2">
    <location>
        <position position="55"/>
    </location>
    <ligand>
        <name>isopentenyl diphosphate</name>
        <dbReference type="ChEBI" id="CHEBI:128769"/>
    </ligand>
</feature>
<feature type="binding site" evidence="3">
    <location>
        <position position="86"/>
    </location>
    <ligand>
        <name>isopentenyl diphosphate</name>
        <dbReference type="ChEBI" id="CHEBI:128769"/>
    </ligand>
</feature>
<feature type="binding site" evidence="2">
    <location>
        <position position="93"/>
    </location>
    <ligand>
        <name>Mg(2+)</name>
        <dbReference type="ChEBI" id="CHEBI:18420"/>
        <label>1</label>
    </ligand>
</feature>
<feature type="binding site" evidence="2">
    <location>
        <position position="93"/>
    </location>
    <ligand>
        <name>Mg(2+)</name>
        <dbReference type="ChEBI" id="CHEBI:18420"/>
        <label>2</label>
    </ligand>
</feature>
<feature type="binding site" evidence="2">
    <location>
        <position position="99"/>
    </location>
    <ligand>
        <name>Mg(2+)</name>
        <dbReference type="ChEBI" id="CHEBI:18420"/>
        <label>1</label>
    </ligand>
</feature>
<feature type="binding site" evidence="2">
    <location>
        <position position="99"/>
    </location>
    <ligand>
        <name>Mg(2+)</name>
        <dbReference type="ChEBI" id="CHEBI:18420"/>
        <label>2</label>
    </ligand>
</feature>
<feature type="binding site" evidence="1">
    <location>
        <position position="104"/>
    </location>
    <ligand>
        <name>(2E,6E)-farnesyl diphosphate</name>
        <dbReference type="ChEBI" id="CHEBI:175763"/>
    </ligand>
</feature>
<feature type="binding site" evidence="2">
    <location>
        <position position="105"/>
    </location>
    <ligand>
        <name>isopentenyl diphosphate</name>
        <dbReference type="ChEBI" id="CHEBI:128769"/>
    </ligand>
</feature>
<feature type="binding site" evidence="1">
    <location>
        <position position="188"/>
    </location>
    <ligand>
        <name>(2E,6E)-farnesyl diphosphate</name>
        <dbReference type="ChEBI" id="CHEBI:175763"/>
    </ligand>
</feature>
<feature type="binding site" evidence="1">
    <location>
        <position position="189"/>
    </location>
    <ligand>
        <name>(2E,6E)-farnesyl diphosphate</name>
        <dbReference type="ChEBI" id="CHEBI:175763"/>
    </ligand>
</feature>
<feature type="binding site" evidence="1">
    <location>
        <position position="226"/>
    </location>
    <ligand>
        <name>(2E,6E)-farnesyl diphosphate</name>
        <dbReference type="ChEBI" id="CHEBI:175763"/>
    </ligand>
</feature>
<dbReference type="EC" id="2.5.1.29"/>
<dbReference type="EMBL" id="M38424">
    <property type="protein sequence ID" value="AAA24819.1"/>
    <property type="molecule type" value="Genomic_DNA"/>
</dbReference>
<dbReference type="EMBL" id="M87280">
    <property type="protein sequence ID" value="AAA64977.1"/>
    <property type="molecule type" value="Genomic_DNA"/>
</dbReference>
<dbReference type="PIR" id="C39273">
    <property type="entry name" value="C39273"/>
</dbReference>
<dbReference type="SMR" id="P22873"/>
<dbReference type="BioCyc" id="MetaCyc:MONOMER-18246"/>
<dbReference type="UniPathway" id="UPA00389">
    <property type="reaction ID" value="UER00564"/>
</dbReference>
<dbReference type="GO" id="GO:0004311">
    <property type="term" value="F:geranylgeranyl diphosphate synthase activity"/>
    <property type="evidence" value="ECO:0000314"/>
    <property type="project" value="UniProtKB"/>
</dbReference>
<dbReference type="GO" id="GO:0046872">
    <property type="term" value="F:metal ion binding"/>
    <property type="evidence" value="ECO:0007669"/>
    <property type="project" value="UniProtKB-KW"/>
</dbReference>
<dbReference type="GO" id="GO:0016117">
    <property type="term" value="P:carotenoid biosynthetic process"/>
    <property type="evidence" value="ECO:0007669"/>
    <property type="project" value="UniProtKB-KW"/>
</dbReference>
<dbReference type="GO" id="GO:0033386">
    <property type="term" value="P:geranylgeranyl diphosphate biosynthetic process"/>
    <property type="evidence" value="ECO:0000314"/>
    <property type="project" value="UniProtKB"/>
</dbReference>
<dbReference type="CDD" id="cd00685">
    <property type="entry name" value="Trans_IPPS_HT"/>
    <property type="match status" value="1"/>
</dbReference>
<dbReference type="FunFam" id="1.10.600.10:FF:000001">
    <property type="entry name" value="Geranylgeranyl diphosphate synthase"/>
    <property type="match status" value="1"/>
</dbReference>
<dbReference type="Gene3D" id="1.10.600.10">
    <property type="entry name" value="Farnesyl Diphosphate Synthase"/>
    <property type="match status" value="1"/>
</dbReference>
<dbReference type="InterPro" id="IPR008949">
    <property type="entry name" value="Isoprenoid_synthase_dom_sf"/>
</dbReference>
<dbReference type="InterPro" id="IPR000092">
    <property type="entry name" value="Polyprenyl_synt"/>
</dbReference>
<dbReference type="InterPro" id="IPR033749">
    <property type="entry name" value="Polyprenyl_synt_CS"/>
</dbReference>
<dbReference type="PANTHER" id="PTHR43281">
    <property type="entry name" value="FARNESYL DIPHOSPHATE SYNTHASE"/>
    <property type="match status" value="1"/>
</dbReference>
<dbReference type="PANTHER" id="PTHR43281:SF1">
    <property type="entry name" value="FARNESYL DIPHOSPHATE SYNTHASE"/>
    <property type="match status" value="1"/>
</dbReference>
<dbReference type="Pfam" id="PF00348">
    <property type="entry name" value="polyprenyl_synt"/>
    <property type="match status" value="1"/>
</dbReference>
<dbReference type="SFLD" id="SFLDS00005">
    <property type="entry name" value="Isoprenoid_Synthase_Type_I"/>
    <property type="match status" value="1"/>
</dbReference>
<dbReference type="SUPFAM" id="SSF48576">
    <property type="entry name" value="Terpenoid synthases"/>
    <property type="match status" value="1"/>
</dbReference>
<dbReference type="PROSITE" id="PS00723">
    <property type="entry name" value="POLYPRENYL_SYNTHASE_1"/>
    <property type="match status" value="1"/>
</dbReference>
<dbReference type="PROSITE" id="PS00444">
    <property type="entry name" value="POLYPRENYL_SYNTHASE_2"/>
    <property type="match status" value="1"/>
</dbReference>
<comment type="function">
    <text evidence="4">Catalyzes the condensation of farnesyl diphosphate (FPP) and isopentenyl diphosphate (IPP) to yield geranylgeranyl diphosphate (GGPP) needed for biosynthesis of carotenoids and diterpenes.</text>
</comment>
<comment type="catalytic activity">
    <reaction evidence="4">
        <text>isopentenyl diphosphate + (2E,6E)-farnesyl diphosphate = (2E,6E,10E)-geranylgeranyl diphosphate + diphosphate</text>
        <dbReference type="Rhea" id="RHEA:17653"/>
        <dbReference type="ChEBI" id="CHEBI:33019"/>
        <dbReference type="ChEBI" id="CHEBI:58756"/>
        <dbReference type="ChEBI" id="CHEBI:128769"/>
        <dbReference type="ChEBI" id="CHEBI:175763"/>
        <dbReference type="EC" id="2.5.1.29"/>
    </reaction>
</comment>
<comment type="cofactor">
    <cofactor evidence="1">
        <name>Mg(2+)</name>
        <dbReference type="ChEBI" id="CHEBI:18420"/>
    </cofactor>
    <text evidence="1">Binds 2 Mg(2+) ions per subunit.</text>
</comment>
<comment type="pathway">
    <text>Isoprenoid biosynthesis; geranylgeranyl diphosphate biosynthesis; geranylgeranyl diphosphate from farnesyl diphosphate and isopentenyl diphosphate: step 1/1.</text>
</comment>
<comment type="similarity">
    <text evidence="5">Belongs to the FPP/GGPP synthase family.</text>
</comment>
<organism>
    <name type="scientific">Pseudescherichia vulneris</name>
    <name type="common">Escherichia vulneris</name>
    <dbReference type="NCBI Taxonomy" id="566"/>
    <lineage>
        <taxon>Bacteria</taxon>
        <taxon>Pseudomonadati</taxon>
        <taxon>Pseudomonadota</taxon>
        <taxon>Gammaproteobacteria</taxon>
        <taxon>Enterobacterales</taxon>
        <taxon>Enterobacteriaceae</taxon>
        <taxon>Pseudescherichia</taxon>
    </lineage>
</organism>
<evidence type="ECO:0000250" key="1"/>
<evidence type="ECO:0000250" key="2">
    <source>
        <dbReference type="UniProtKB" id="P14324"/>
    </source>
</evidence>
<evidence type="ECO:0000250" key="3">
    <source>
        <dbReference type="UniProtKB" id="Q12051"/>
    </source>
</evidence>
<evidence type="ECO:0000269" key="4">
    <source>
    </source>
</evidence>
<evidence type="ECO:0000305" key="5"/>